<sequence>MSEQEDQEAPKQFTFGTVGFDARFPNTNQTKHCFQSYIDYFRCIKAKGEDFVPCKQFWHAYQSLCPMEWVERWDEQRENGTFPAPI</sequence>
<reference key="1">
    <citation type="journal article" date="2002" name="Nature">
        <title>The genome sequence of Schizosaccharomyces pombe.</title>
        <authorList>
            <person name="Wood V."/>
            <person name="Gwilliam R."/>
            <person name="Rajandream M.A."/>
            <person name="Lyne M.H."/>
            <person name="Lyne R."/>
            <person name="Stewart A."/>
            <person name="Sgouros J.G."/>
            <person name="Peat N."/>
            <person name="Hayles J."/>
            <person name="Baker S.G."/>
            <person name="Basham D."/>
            <person name="Bowman S."/>
            <person name="Brooks K."/>
            <person name="Brown D."/>
            <person name="Brown S."/>
            <person name="Chillingworth T."/>
            <person name="Churcher C.M."/>
            <person name="Collins M."/>
            <person name="Connor R."/>
            <person name="Cronin A."/>
            <person name="Davis P."/>
            <person name="Feltwell T."/>
            <person name="Fraser A."/>
            <person name="Gentles S."/>
            <person name="Goble A."/>
            <person name="Hamlin N."/>
            <person name="Harris D.E."/>
            <person name="Hidalgo J."/>
            <person name="Hodgson G."/>
            <person name="Holroyd S."/>
            <person name="Hornsby T."/>
            <person name="Howarth S."/>
            <person name="Huckle E.J."/>
            <person name="Hunt S."/>
            <person name="Jagels K."/>
            <person name="James K.D."/>
            <person name="Jones L."/>
            <person name="Jones M."/>
            <person name="Leather S."/>
            <person name="McDonald S."/>
            <person name="McLean J."/>
            <person name="Mooney P."/>
            <person name="Moule S."/>
            <person name="Mungall K.L."/>
            <person name="Murphy L.D."/>
            <person name="Niblett D."/>
            <person name="Odell C."/>
            <person name="Oliver K."/>
            <person name="O'Neil S."/>
            <person name="Pearson D."/>
            <person name="Quail M.A."/>
            <person name="Rabbinowitsch E."/>
            <person name="Rutherford K.M."/>
            <person name="Rutter S."/>
            <person name="Saunders D."/>
            <person name="Seeger K."/>
            <person name="Sharp S."/>
            <person name="Skelton J."/>
            <person name="Simmonds M.N."/>
            <person name="Squares R."/>
            <person name="Squares S."/>
            <person name="Stevens K."/>
            <person name="Taylor K."/>
            <person name="Taylor R.G."/>
            <person name="Tivey A."/>
            <person name="Walsh S.V."/>
            <person name="Warren T."/>
            <person name="Whitehead S."/>
            <person name="Woodward J.R."/>
            <person name="Volckaert G."/>
            <person name="Aert R."/>
            <person name="Robben J."/>
            <person name="Grymonprez B."/>
            <person name="Weltjens I."/>
            <person name="Vanstreels E."/>
            <person name="Rieger M."/>
            <person name="Schaefer M."/>
            <person name="Mueller-Auer S."/>
            <person name="Gabel C."/>
            <person name="Fuchs M."/>
            <person name="Duesterhoeft A."/>
            <person name="Fritzc C."/>
            <person name="Holzer E."/>
            <person name="Moestl D."/>
            <person name="Hilbert H."/>
            <person name="Borzym K."/>
            <person name="Langer I."/>
            <person name="Beck A."/>
            <person name="Lehrach H."/>
            <person name="Reinhardt R."/>
            <person name="Pohl T.M."/>
            <person name="Eger P."/>
            <person name="Zimmermann W."/>
            <person name="Wedler H."/>
            <person name="Wambutt R."/>
            <person name="Purnelle B."/>
            <person name="Goffeau A."/>
            <person name="Cadieu E."/>
            <person name="Dreano S."/>
            <person name="Gloux S."/>
            <person name="Lelaure V."/>
            <person name="Mottier S."/>
            <person name="Galibert F."/>
            <person name="Aves S.J."/>
            <person name="Xiang Z."/>
            <person name="Hunt C."/>
            <person name="Moore K."/>
            <person name="Hurst S.M."/>
            <person name="Lucas M."/>
            <person name="Rochet M."/>
            <person name="Gaillardin C."/>
            <person name="Tallada V.A."/>
            <person name="Garzon A."/>
            <person name="Thode G."/>
            <person name="Daga R.R."/>
            <person name="Cruzado L."/>
            <person name="Jimenez J."/>
            <person name="Sanchez M."/>
            <person name="del Rey F."/>
            <person name="Benito J."/>
            <person name="Dominguez A."/>
            <person name="Revuelta J.L."/>
            <person name="Moreno S."/>
            <person name="Armstrong J."/>
            <person name="Forsburg S.L."/>
            <person name="Cerutti L."/>
            <person name="Lowe T."/>
            <person name="McCombie W.R."/>
            <person name="Paulsen I."/>
            <person name="Potashkin J."/>
            <person name="Shpakovski G.V."/>
            <person name="Ussery D."/>
            <person name="Barrell B.G."/>
            <person name="Nurse P."/>
        </authorList>
    </citation>
    <scope>NUCLEOTIDE SEQUENCE [LARGE SCALE GENOMIC DNA]</scope>
    <source>
        <strain>972 / ATCC 24843</strain>
    </source>
</reference>
<dbReference type="EMBL" id="CU329672">
    <property type="protein sequence ID" value="CAA21442.2"/>
    <property type="molecule type" value="Genomic_DNA"/>
</dbReference>
<dbReference type="PIR" id="T40973">
    <property type="entry name" value="T40973"/>
</dbReference>
<dbReference type="RefSeq" id="NP_588322.2">
    <property type="nucleotide sequence ID" value="NM_001023313.3"/>
</dbReference>
<dbReference type="PDB" id="8C8Q">
    <property type="method" value="EM"/>
    <property type="resolution" value="3.36 A"/>
    <property type="chains" value="J=1-86"/>
</dbReference>
<dbReference type="PDB" id="8Q1B">
    <property type="method" value="EM"/>
    <property type="resolution" value="3.40 A"/>
    <property type="chains" value="j=1-86"/>
</dbReference>
<dbReference type="PDBsum" id="8C8Q"/>
<dbReference type="PDBsum" id="8Q1B"/>
<dbReference type="EMDB" id="EMD-16491"/>
<dbReference type="EMDB" id="EMD-18062"/>
<dbReference type="SMR" id="O94581"/>
<dbReference type="BioGRID" id="275416">
    <property type="interactions" value="1"/>
</dbReference>
<dbReference type="ComplexPortal" id="CPX-9641">
    <property type="entry name" value="Mitochondrial respiratory chain complex IV"/>
</dbReference>
<dbReference type="FunCoup" id="O94581">
    <property type="interactions" value="246"/>
</dbReference>
<dbReference type="STRING" id="284812.O94581"/>
<dbReference type="iPTMnet" id="O94581"/>
<dbReference type="PaxDb" id="4896-SPCC1442.08c.1"/>
<dbReference type="EnsemblFungi" id="SPCC1442.08c.1">
    <property type="protein sequence ID" value="SPCC1442.08c.1:pep"/>
    <property type="gene ID" value="SPCC1442.08c"/>
</dbReference>
<dbReference type="GeneID" id="2538835"/>
<dbReference type="KEGG" id="spo:2538835"/>
<dbReference type="PomBase" id="SPCC1442.08c">
    <property type="gene designation" value="cox12"/>
</dbReference>
<dbReference type="VEuPathDB" id="FungiDB:SPCC1442.08c"/>
<dbReference type="eggNOG" id="KOG3057">
    <property type="taxonomic scope" value="Eukaryota"/>
</dbReference>
<dbReference type="HOGENOM" id="CLU_133964_2_0_1"/>
<dbReference type="InParanoid" id="O94581"/>
<dbReference type="OMA" id="NEWIAKW"/>
<dbReference type="PhylomeDB" id="O94581"/>
<dbReference type="UniPathway" id="UPA00705"/>
<dbReference type="PRO" id="PR:O94581"/>
<dbReference type="Proteomes" id="UP000002485">
    <property type="component" value="Chromosome III"/>
</dbReference>
<dbReference type="GO" id="GO:0005743">
    <property type="term" value="C:mitochondrial inner membrane"/>
    <property type="evidence" value="ECO:0000305"/>
    <property type="project" value="PomBase"/>
</dbReference>
<dbReference type="GO" id="GO:0005739">
    <property type="term" value="C:mitochondrion"/>
    <property type="evidence" value="ECO:0000318"/>
    <property type="project" value="GO_Central"/>
</dbReference>
<dbReference type="GO" id="GO:0045277">
    <property type="term" value="C:respiratory chain complex IV"/>
    <property type="evidence" value="ECO:0000314"/>
    <property type="project" value="PomBase"/>
</dbReference>
<dbReference type="GO" id="GO:0006123">
    <property type="term" value="P:mitochondrial electron transport, cytochrome c to oxygen"/>
    <property type="evidence" value="ECO:0000305"/>
    <property type="project" value="PomBase"/>
</dbReference>
<dbReference type="GO" id="GO:1902600">
    <property type="term" value="P:proton transmembrane transport"/>
    <property type="evidence" value="ECO:0007669"/>
    <property type="project" value="GOC"/>
</dbReference>
<dbReference type="CDD" id="cd00926">
    <property type="entry name" value="Cyt_c_Oxidase_VIb"/>
    <property type="match status" value="1"/>
</dbReference>
<dbReference type="FunFam" id="1.10.10.140:FF:000001">
    <property type="entry name" value="Cytochrome c oxidase subunit 6B1"/>
    <property type="match status" value="1"/>
</dbReference>
<dbReference type="Gene3D" id="1.10.10.140">
    <property type="entry name" value="Cytochrome c oxidase, subunit VIb"/>
    <property type="match status" value="1"/>
</dbReference>
<dbReference type="InterPro" id="IPR048280">
    <property type="entry name" value="COX6B-like"/>
</dbReference>
<dbReference type="InterPro" id="IPR036549">
    <property type="entry name" value="CX6/COA6-like_sf"/>
</dbReference>
<dbReference type="InterPro" id="IPR003213">
    <property type="entry name" value="Cyt_c_oxidase_su6B"/>
</dbReference>
<dbReference type="PANTHER" id="PTHR46281:SF8">
    <property type="entry name" value="CYTOCHROME C OXIDASE SUBUNIT 12, MITOCHONDRIAL"/>
    <property type="match status" value="1"/>
</dbReference>
<dbReference type="PANTHER" id="PTHR46281">
    <property type="entry name" value="CYTOCHROME C OXIDASE SUBUNIT 6B"/>
    <property type="match status" value="1"/>
</dbReference>
<dbReference type="Pfam" id="PF02297">
    <property type="entry name" value="COX6B"/>
    <property type="match status" value="1"/>
</dbReference>
<dbReference type="PIRSF" id="PIRSF000278">
    <property type="entry name" value="Cyt_c_oxidase_6B"/>
    <property type="match status" value="1"/>
</dbReference>
<dbReference type="SUPFAM" id="SSF47694">
    <property type="entry name" value="Cytochrome c oxidase subunit h"/>
    <property type="match status" value="1"/>
</dbReference>
<dbReference type="PROSITE" id="PS51808">
    <property type="entry name" value="CHCH"/>
    <property type="match status" value="1"/>
</dbReference>
<feature type="chain" id="PRO_0000194924" description="Cytochrome c oxidase subunit 12, mitochondrial">
    <location>
        <begin position="1"/>
        <end position="86"/>
    </location>
</feature>
<feature type="domain" description="CHCH" evidence="2">
    <location>
        <begin position="30"/>
        <end position="73"/>
    </location>
</feature>
<feature type="short sequence motif" description="Cx9C motif" evidence="2">
    <location>
        <begin position="33"/>
        <end position="43"/>
    </location>
</feature>
<feature type="short sequence motif" description="Cx10C motif" evidence="2">
    <location>
        <begin position="54"/>
        <end position="65"/>
    </location>
</feature>
<feature type="disulfide bond" evidence="2">
    <location>
        <begin position="33"/>
        <end position="65"/>
    </location>
</feature>
<feature type="disulfide bond" evidence="2">
    <location>
        <begin position="43"/>
        <end position="54"/>
    </location>
</feature>
<feature type="strand" evidence="4">
    <location>
        <begin position="26"/>
        <end position="28"/>
    </location>
</feature>
<feature type="helix" evidence="4">
    <location>
        <begin position="30"/>
        <end position="45"/>
    </location>
</feature>
<feature type="helix" evidence="4">
    <location>
        <begin position="52"/>
        <end position="62"/>
    </location>
</feature>
<feature type="strand" evidence="4">
    <location>
        <begin position="63"/>
        <end position="65"/>
    </location>
</feature>
<feature type="strand" evidence="4">
    <location>
        <begin position="67"/>
        <end position="69"/>
    </location>
</feature>
<feature type="helix" evidence="4">
    <location>
        <begin position="70"/>
        <end position="79"/>
    </location>
</feature>
<keyword id="KW-0002">3D-structure</keyword>
<keyword id="KW-1015">Disulfide bond</keyword>
<keyword id="KW-0472">Membrane</keyword>
<keyword id="KW-0496">Mitochondrion</keyword>
<keyword id="KW-0999">Mitochondrion inner membrane</keyword>
<keyword id="KW-1185">Reference proteome</keyword>
<protein>
    <recommendedName>
        <fullName>Cytochrome c oxidase subunit 12, mitochondrial</fullName>
    </recommendedName>
    <alternativeName>
        <fullName>Cytochrome c oxidase polypeptide VIb</fullName>
    </alternativeName>
</protein>
<evidence type="ECO:0000250" key="1">
    <source>
        <dbReference type="UniProtKB" id="Q01519"/>
    </source>
</evidence>
<evidence type="ECO:0000255" key="2">
    <source>
        <dbReference type="PROSITE-ProRule" id="PRU01150"/>
    </source>
</evidence>
<evidence type="ECO:0000305" key="3"/>
<evidence type="ECO:0007829" key="4">
    <source>
        <dbReference type="PDB" id="8C8Q"/>
    </source>
</evidence>
<comment type="function">
    <text evidence="1">Component of the cytochrome c oxidase, the last enzyme in the mitochondrial electron transport chain which drives oxidative phosphorylation. The respiratory chain contains 3 multisubunit complexes succinate dehydrogenase (complex II, CII), ubiquinol-cytochrome c oxidoreductase (cytochrome b-c1 complex, complex III, CIII) and cytochrome c oxidase (complex IV, CIV), that cooperate to transfer electrons derived from NADH and succinate to molecular oxygen, creating an electrochemical gradient over the inner membrane that drives transmembrane transport and the ATP synthase. Cytochrome c oxidase is the component of the respiratory chain that catalyzes the reduction of oxygen to water. Electrons originating from reduced cytochrome c in the intermembrane space (IMS) are transferred via the dinuclear copper A center (CU(A)) of subunit 2 and heme A of subunit 1 to the active site in subunit 1, a binuclear center (BNC) formed by heme A3 and copper B (CU(B)). The BNC reduces molecular oxygen to 2 water molecules using 4 electrons from cytochrome c in the IMS and 4 protons from the mitochondrial matrix.</text>
</comment>
<comment type="pathway">
    <text evidence="1">Energy metabolism; oxidative phosphorylation.</text>
</comment>
<comment type="subunit">
    <text evidence="1">Component of the cytochrome c oxidase (complex IV, CIV), a multisubunit enzyme composed of a catalytic core of 3 subunits and several supernumerary subunits. The complex exists as a monomer or a dimer and forms supercomplexes (SCs) in the inner mitochondrial membrane with ubiquinol-cytochrome c oxidoreductase (cytochrome b-c1 complex, complex III, CIII).</text>
</comment>
<comment type="subcellular location">
    <subcellularLocation>
        <location evidence="1">Mitochondrion inner membrane</location>
        <topology evidence="1">Peripheral membrane protein</topology>
        <orientation evidence="1">Intermembrane side</orientation>
    </subcellularLocation>
</comment>
<comment type="similarity">
    <text evidence="3">Belongs to the cytochrome c oxidase subunit 6B family.</text>
</comment>
<organism>
    <name type="scientific">Schizosaccharomyces pombe (strain 972 / ATCC 24843)</name>
    <name type="common">Fission yeast</name>
    <dbReference type="NCBI Taxonomy" id="284812"/>
    <lineage>
        <taxon>Eukaryota</taxon>
        <taxon>Fungi</taxon>
        <taxon>Dikarya</taxon>
        <taxon>Ascomycota</taxon>
        <taxon>Taphrinomycotina</taxon>
        <taxon>Schizosaccharomycetes</taxon>
        <taxon>Schizosaccharomycetales</taxon>
        <taxon>Schizosaccharomycetaceae</taxon>
        <taxon>Schizosaccharomyces</taxon>
    </lineage>
</organism>
<proteinExistence type="evidence at protein level"/>
<gene>
    <name type="primary">cox12</name>
    <name type="ORF">SPCC1442.08c</name>
</gene>
<accession>O94581</accession>
<name>COX12_SCHPO</name>